<feature type="chain" id="PRO_0000077955" description="Uncharacterized protein HI_0787">
    <location>
        <begin position="1"/>
        <end position="201"/>
    </location>
</feature>
<sequence>MKYILIHDLPYQEEEIGITEFYDENDLDTEADIYDRETFGILLGEYVTGLYLLDDTFIEPVLDNINIPNNVYSTNIFAIHYVAKHILGIKDLDKRLKSGDIELVRELGEVTIGGKEKYFYSFATKYCSHHNPIAFPIYDSYVEQVLLYFNKVDKFSAFKRKDLKNYRKFKEVLIDFQRFNLKELDLYLWLLGKEIFPKSKN</sequence>
<name>Y787_HAEIN</name>
<accession>P44052</accession>
<protein>
    <recommendedName>
        <fullName>Uncharacterized protein HI_0787</fullName>
    </recommendedName>
</protein>
<proteinExistence type="predicted"/>
<gene>
    <name type="ordered locus">HI_0787</name>
</gene>
<dbReference type="EMBL" id="L42023">
    <property type="protein sequence ID" value="AAC22463.1"/>
    <property type="molecule type" value="Genomic_DNA"/>
</dbReference>
<dbReference type="PIR" id="G64013">
    <property type="entry name" value="G64013"/>
</dbReference>
<dbReference type="RefSeq" id="NP_438946.1">
    <property type="nucleotide sequence ID" value="NC_000907.1"/>
</dbReference>
<dbReference type="STRING" id="71421.HI_0787"/>
<dbReference type="EnsemblBacteria" id="AAC22463">
    <property type="protein sequence ID" value="AAC22463"/>
    <property type="gene ID" value="HI_0787"/>
</dbReference>
<dbReference type="KEGG" id="hin:HI_0787"/>
<dbReference type="PATRIC" id="fig|71421.8.peg.826"/>
<dbReference type="eggNOG" id="ENOG502Z9XG">
    <property type="taxonomic scope" value="Bacteria"/>
</dbReference>
<dbReference type="HOGENOM" id="CLU_093120_0_0_6"/>
<dbReference type="OrthoDB" id="9792813at2"/>
<dbReference type="BioCyc" id="HINF71421:G1GJ1-827-MONOMER"/>
<dbReference type="Proteomes" id="UP000000579">
    <property type="component" value="Chromosome"/>
</dbReference>
<keyword id="KW-1185">Reference proteome</keyword>
<reference key="1">
    <citation type="journal article" date="1995" name="Science">
        <title>Whole-genome random sequencing and assembly of Haemophilus influenzae Rd.</title>
        <authorList>
            <person name="Fleischmann R.D."/>
            <person name="Adams M.D."/>
            <person name="White O."/>
            <person name="Clayton R.A."/>
            <person name="Kirkness E.F."/>
            <person name="Kerlavage A.R."/>
            <person name="Bult C.J."/>
            <person name="Tomb J.-F."/>
            <person name="Dougherty B.A."/>
            <person name="Merrick J.M."/>
            <person name="McKenney K."/>
            <person name="Sutton G.G."/>
            <person name="FitzHugh W."/>
            <person name="Fields C.A."/>
            <person name="Gocayne J.D."/>
            <person name="Scott J.D."/>
            <person name="Shirley R."/>
            <person name="Liu L.-I."/>
            <person name="Glodek A."/>
            <person name="Kelley J.M."/>
            <person name="Weidman J.F."/>
            <person name="Phillips C.A."/>
            <person name="Spriggs T."/>
            <person name="Hedblom E."/>
            <person name="Cotton M.D."/>
            <person name="Utterback T.R."/>
            <person name="Hanna M.C."/>
            <person name="Nguyen D.T."/>
            <person name="Saudek D.M."/>
            <person name="Brandon R.C."/>
            <person name="Fine L.D."/>
            <person name="Fritchman J.L."/>
            <person name="Fuhrmann J.L."/>
            <person name="Geoghagen N.S.M."/>
            <person name="Gnehm C.L."/>
            <person name="McDonald L.A."/>
            <person name="Small K.V."/>
            <person name="Fraser C.M."/>
            <person name="Smith H.O."/>
            <person name="Venter J.C."/>
        </authorList>
    </citation>
    <scope>NUCLEOTIDE SEQUENCE [LARGE SCALE GENOMIC DNA]</scope>
    <source>
        <strain>ATCC 51907 / DSM 11121 / KW20 / Rd</strain>
    </source>
</reference>
<organism>
    <name type="scientific">Haemophilus influenzae (strain ATCC 51907 / DSM 11121 / KW20 / Rd)</name>
    <dbReference type="NCBI Taxonomy" id="71421"/>
    <lineage>
        <taxon>Bacteria</taxon>
        <taxon>Pseudomonadati</taxon>
        <taxon>Pseudomonadota</taxon>
        <taxon>Gammaproteobacteria</taxon>
        <taxon>Pasteurellales</taxon>
        <taxon>Pasteurellaceae</taxon>
        <taxon>Haemophilus</taxon>
    </lineage>
</organism>